<organism>
    <name type="scientific">Oceanobacillus iheyensis (strain DSM 14371 / CIP 107618 / JCM 11309 / KCTC 3954 / HTE831)</name>
    <dbReference type="NCBI Taxonomy" id="221109"/>
    <lineage>
        <taxon>Bacteria</taxon>
        <taxon>Bacillati</taxon>
        <taxon>Bacillota</taxon>
        <taxon>Bacilli</taxon>
        <taxon>Bacillales</taxon>
        <taxon>Bacillaceae</taxon>
        <taxon>Oceanobacillus</taxon>
    </lineage>
</organism>
<comment type="function">
    <text evidence="1">Catalyzes the attachment of glutamate to tRNA(Glu) in a two-step reaction: glutamate is first activated by ATP to form Glu-AMP and then transferred to the acceptor end of tRNA(Glu).</text>
</comment>
<comment type="catalytic activity">
    <reaction evidence="1">
        <text>tRNA(Glu) + L-glutamate + ATP = L-glutamyl-tRNA(Glu) + AMP + diphosphate</text>
        <dbReference type="Rhea" id="RHEA:23540"/>
        <dbReference type="Rhea" id="RHEA-COMP:9663"/>
        <dbReference type="Rhea" id="RHEA-COMP:9680"/>
        <dbReference type="ChEBI" id="CHEBI:29985"/>
        <dbReference type="ChEBI" id="CHEBI:30616"/>
        <dbReference type="ChEBI" id="CHEBI:33019"/>
        <dbReference type="ChEBI" id="CHEBI:78442"/>
        <dbReference type="ChEBI" id="CHEBI:78520"/>
        <dbReference type="ChEBI" id="CHEBI:456215"/>
        <dbReference type="EC" id="6.1.1.17"/>
    </reaction>
</comment>
<comment type="subunit">
    <text evidence="1">Monomer.</text>
</comment>
<comment type="subcellular location">
    <subcellularLocation>
        <location evidence="1">Cytoplasm</location>
    </subcellularLocation>
</comment>
<comment type="similarity">
    <text evidence="1">Belongs to the class-I aminoacyl-tRNA synthetase family. Glutamate--tRNA ligase type 1 subfamily.</text>
</comment>
<accession>Q8EU02</accession>
<feature type="chain" id="PRO_0000119616" description="Glutamate--tRNA ligase">
    <location>
        <begin position="1"/>
        <end position="489"/>
    </location>
</feature>
<feature type="short sequence motif" description="'HIGH' region" evidence="1">
    <location>
        <begin position="11"/>
        <end position="21"/>
    </location>
</feature>
<feature type="short sequence motif" description="'KMSKS' region" evidence="1">
    <location>
        <begin position="252"/>
        <end position="256"/>
    </location>
</feature>
<feature type="binding site" evidence="1">
    <location>
        <position position="255"/>
    </location>
    <ligand>
        <name>ATP</name>
        <dbReference type="ChEBI" id="CHEBI:30616"/>
    </ligand>
</feature>
<dbReference type="EC" id="6.1.1.17" evidence="1"/>
<dbReference type="EMBL" id="BA000028">
    <property type="protein sequence ID" value="BAC12052.1"/>
    <property type="molecule type" value="Genomic_DNA"/>
</dbReference>
<dbReference type="RefSeq" id="WP_011064499.1">
    <property type="nucleotide sequence ID" value="NC_004193.1"/>
</dbReference>
<dbReference type="SMR" id="Q8EU02"/>
<dbReference type="STRING" id="221109.gene:10732286"/>
<dbReference type="KEGG" id="oih:OB0096"/>
<dbReference type="eggNOG" id="COG0008">
    <property type="taxonomic scope" value="Bacteria"/>
</dbReference>
<dbReference type="HOGENOM" id="CLU_015768_6_1_9"/>
<dbReference type="OrthoDB" id="9807503at2"/>
<dbReference type="PhylomeDB" id="Q8EU02"/>
<dbReference type="Proteomes" id="UP000000822">
    <property type="component" value="Chromosome"/>
</dbReference>
<dbReference type="GO" id="GO:0005829">
    <property type="term" value="C:cytosol"/>
    <property type="evidence" value="ECO:0007669"/>
    <property type="project" value="TreeGrafter"/>
</dbReference>
<dbReference type="GO" id="GO:0005524">
    <property type="term" value="F:ATP binding"/>
    <property type="evidence" value="ECO:0007669"/>
    <property type="project" value="UniProtKB-UniRule"/>
</dbReference>
<dbReference type="GO" id="GO:0004818">
    <property type="term" value="F:glutamate-tRNA ligase activity"/>
    <property type="evidence" value="ECO:0007669"/>
    <property type="project" value="UniProtKB-UniRule"/>
</dbReference>
<dbReference type="GO" id="GO:0000049">
    <property type="term" value="F:tRNA binding"/>
    <property type="evidence" value="ECO:0007669"/>
    <property type="project" value="InterPro"/>
</dbReference>
<dbReference type="GO" id="GO:0008270">
    <property type="term" value="F:zinc ion binding"/>
    <property type="evidence" value="ECO:0007669"/>
    <property type="project" value="InterPro"/>
</dbReference>
<dbReference type="GO" id="GO:0006424">
    <property type="term" value="P:glutamyl-tRNA aminoacylation"/>
    <property type="evidence" value="ECO:0007669"/>
    <property type="project" value="UniProtKB-UniRule"/>
</dbReference>
<dbReference type="CDD" id="cd00808">
    <property type="entry name" value="GluRS_core"/>
    <property type="match status" value="1"/>
</dbReference>
<dbReference type="FunFam" id="1.10.10.350:FF:000002">
    <property type="entry name" value="Glutamate--tRNA ligase"/>
    <property type="match status" value="1"/>
</dbReference>
<dbReference type="FunFam" id="3.40.50.620:FF:000007">
    <property type="entry name" value="Glutamate--tRNA ligase"/>
    <property type="match status" value="1"/>
</dbReference>
<dbReference type="Gene3D" id="1.10.10.350">
    <property type="match status" value="1"/>
</dbReference>
<dbReference type="Gene3D" id="3.40.50.620">
    <property type="entry name" value="HUPs"/>
    <property type="match status" value="1"/>
</dbReference>
<dbReference type="HAMAP" id="MF_00022">
    <property type="entry name" value="Glu_tRNA_synth_type1"/>
    <property type="match status" value="1"/>
</dbReference>
<dbReference type="InterPro" id="IPR045462">
    <property type="entry name" value="aa-tRNA-synth_I_cd-bd"/>
</dbReference>
<dbReference type="InterPro" id="IPR020751">
    <property type="entry name" value="aa-tRNA-synth_I_codon-bd_sub2"/>
</dbReference>
<dbReference type="InterPro" id="IPR001412">
    <property type="entry name" value="aa-tRNA-synth_I_CS"/>
</dbReference>
<dbReference type="InterPro" id="IPR008925">
    <property type="entry name" value="aa_tRNA-synth_I_cd-bd_sf"/>
</dbReference>
<dbReference type="InterPro" id="IPR004527">
    <property type="entry name" value="Glu-tRNA-ligase_bac/mito"/>
</dbReference>
<dbReference type="InterPro" id="IPR000924">
    <property type="entry name" value="Glu/Gln-tRNA-synth"/>
</dbReference>
<dbReference type="InterPro" id="IPR020058">
    <property type="entry name" value="Glu/Gln-tRNA-synth_Ib_cat-dom"/>
</dbReference>
<dbReference type="InterPro" id="IPR049940">
    <property type="entry name" value="GluQ/Sye"/>
</dbReference>
<dbReference type="InterPro" id="IPR033910">
    <property type="entry name" value="GluRS_core"/>
</dbReference>
<dbReference type="InterPro" id="IPR014729">
    <property type="entry name" value="Rossmann-like_a/b/a_fold"/>
</dbReference>
<dbReference type="NCBIfam" id="TIGR00464">
    <property type="entry name" value="gltX_bact"/>
    <property type="match status" value="1"/>
</dbReference>
<dbReference type="PANTHER" id="PTHR43311">
    <property type="entry name" value="GLUTAMATE--TRNA LIGASE"/>
    <property type="match status" value="1"/>
</dbReference>
<dbReference type="PANTHER" id="PTHR43311:SF2">
    <property type="entry name" value="GLUTAMATE--TRNA LIGASE, MITOCHONDRIAL-RELATED"/>
    <property type="match status" value="1"/>
</dbReference>
<dbReference type="Pfam" id="PF19269">
    <property type="entry name" value="Anticodon_2"/>
    <property type="match status" value="1"/>
</dbReference>
<dbReference type="Pfam" id="PF00749">
    <property type="entry name" value="tRNA-synt_1c"/>
    <property type="match status" value="1"/>
</dbReference>
<dbReference type="PRINTS" id="PR00987">
    <property type="entry name" value="TRNASYNTHGLU"/>
</dbReference>
<dbReference type="SUPFAM" id="SSF48163">
    <property type="entry name" value="An anticodon-binding domain of class I aminoacyl-tRNA synthetases"/>
    <property type="match status" value="1"/>
</dbReference>
<dbReference type="SUPFAM" id="SSF52374">
    <property type="entry name" value="Nucleotidylyl transferase"/>
    <property type="match status" value="1"/>
</dbReference>
<dbReference type="PROSITE" id="PS00178">
    <property type="entry name" value="AA_TRNA_LIGASE_I"/>
    <property type="match status" value="1"/>
</dbReference>
<proteinExistence type="inferred from homology"/>
<sequence>MSKEVRVRYAPSPTGHLHIGNARTALFNYLYAKHFDGKFIIRTEDTDDKRNVEGGEESQLKYLKWLGLQWDEGADIGGEYGPYRQTERLDIYQEYLNELFAKNLAYKCYMTEDELEAEREEQRQNGQVPKYSGAHRDLTPEQIEQFEAEGRQPSIRFRVPENTTYTFNDLVRGKITFESSDFGDWVIVKKNGIPTYNFAVAIDDHLMKISDVLRGEEHISNTPKQMMIFDAFGWEAPRYGHMTLILNEERKKLSKRDEHILQFIEQYRNLGYLPEAMFNFISLLGWSPVGEEEMFTQAQLIEIFDPERLSTSAAIFDQHKLKWMNNEYIKAADLDRVIDLALPHLIKAGKLSEDMDDETRQWAENVISLYREQLRYGAEIVELTELFFQKEISYDEEAKEVLNGEQVPEVLQVFTDKLIHLESFDKDAIKAQFKATQKETGHRGKKLFMPIRVATTGQMHGPELPFAIELLGRDIILNRLDKLLKEMGA</sequence>
<name>SYE_OCEIH</name>
<protein>
    <recommendedName>
        <fullName evidence="1">Glutamate--tRNA ligase</fullName>
        <ecNumber evidence="1">6.1.1.17</ecNumber>
    </recommendedName>
    <alternativeName>
        <fullName evidence="1">Glutamyl-tRNA synthetase</fullName>
        <shortName evidence="1">GluRS</shortName>
    </alternativeName>
</protein>
<gene>
    <name evidence="1" type="primary">gltX</name>
    <name type="ordered locus">OB0096</name>
</gene>
<keyword id="KW-0030">Aminoacyl-tRNA synthetase</keyword>
<keyword id="KW-0067">ATP-binding</keyword>
<keyword id="KW-0963">Cytoplasm</keyword>
<keyword id="KW-0436">Ligase</keyword>
<keyword id="KW-0547">Nucleotide-binding</keyword>
<keyword id="KW-0648">Protein biosynthesis</keyword>
<keyword id="KW-1185">Reference proteome</keyword>
<reference key="1">
    <citation type="journal article" date="2002" name="Nucleic Acids Res.">
        <title>Genome sequence of Oceanobacillus iheyensis isolated from the Iheya Ridge and its unexpected adaptive capabilities to extreme environments.</title>
        <authorList>
            <person name="Takami H."/>
            <person name="Takaki Y."/>
            <person name="Uchiyama I."/>
        </authorList>
    </citation>
    <scope>NUCLEOTIDE SEQUENCE [LARGE SCALE GENOMIC DNA]</scope>
    <source>
        <strain>DSM 14371 / CIP 107618 / JCM 11309 / KCTC 3954 / HTE831</strain>
    </source>
</reference>
<evidence type="ECO:0000255" key="1">
    <source>
        <dbReference type="HAMAP-Rule" id="MF_00022"/>
    </source>
</evidence>